<evidence type="ECO:0000250" key="1"/>
<evidence type="ECO:0000305" key="2"/>
<sequence length="142" mass="16291">MISKRKKKSDTKVYALGQHIRMSAHKARRVIDQIRGRSYEETLMILELMPYRACYPIFKLVYSAAANASHNMGFNETSLVVSKAEVNEGTTVKKFKPRARGRSYPIKRPTCHITIVLEDTTVYDEYVISHDTYSSGGLWDKK</sequence>
<reference key="1">
    <citation type="journal article" date="2008" name="Nature">
        <title>The draft genome of the transgenic tropical fruit tree papaya (Carica papaya Linnaeus).</title>
        <authorList>
            <person name="Ming R."/>
            <person name="Hou S."/>
            <person name="Feng Y."/>
            <person name="Yu Q."/>
            <person name="Dionne-Laporte A."/>
            <person name="Saw J.H."/>
            <person name="Senin P."/>
            <person name="Wang W."/>
            <person name="Ly B.V."/>
            <person name="Lewis K.L."/>
            <person name="Salzberg S.L."/>
            <person name="Feng L."/>
            <person name="Jones M.R."/>
            <person name="Skelton R.L."/>
            <person name="Murray J.E."/>
            <person name="Chen C."/>
            <person name="Qian W."/>
            <person name="Shen J."/>
            <person name="Du P."/>
            <person name="Eustice M."/>
            <person name="Tong E."/>
            <person name="Tang H."/>
            <person name="Lyons E."/>
            <person name="Paull R.E."/>
            <person name="Michael T.P."/>
            <person name="Wall K."/>
            <person name="Rice D.W."/>
            <person name="Albert H."/>
            <person name="Wang M.L."/>
            <person name="Zhu Y.J."/>
            <person name="Schatz M."/>
            <person name="Nagarajan N."/>
            <person name="Acob R.A."/>
            <person name="Guan P."/>
            <person name="Blas A."/>
            <person name="Wai C.M."/>
            <person name="Ackerman C.M."/>
            <person name="Ren Y."/>
            <person name="Liu C."/>
            <person name="Wang J."/>
            <person name="Wang J."/>
            <person name="Na J.K."/>
            <person name="Shakirov E.V."/>
            <person name="Haas B."/>
            <person name="Thimmapuram J."/>
            <person name="Nelson D."/>
            <person name="Wang X."/>
            <person name="Bowers J.E."/>
            <person name="Gschwend A.R."/>
            <person name="Delcher A.L."/>
            <person name="Singh R."/>
            <person name="Suzuki J.Y."/>
            <person name="Tripathi S."/>
            <person name="Neupane K."/>
            <person name="Wei H."/>
            <person name="Irikura B."/>
            <person name="Paidi M."/>
            <person name="Jiang N."/>
            <person name="Zhang W."/>
            <person name="Presting G."/>
            <person name="Windsor A."/>
            <person name="Navajas-Perez R."/>
            <person name="Torres M.J."/>
            <person name="Feltus F.A."/>
            <person name="Porter B."/>
            <person name="Li Y."/>
            <person name="Burroughs A.M."/>
            <person name="Luo M.C."/>
            <person name="Liu L."/>
            <person name="Christopher D.A."/>
            <person name="Mount S.M."/>
            <person name="Moore P.H."/>
            <person name="Sugimura T."/>
            <person name="Jiang J."/>
            <person name="Schuler M.A."/>
            <person name="Friedman V."/>
            <person name="Mitchell-Olds T."/>
            <person name="Shippen D.E."/>
            <person name="dePamphilis C.W."/>
            <person name="Palmer J.D."/>
            <person name="Freeling M."/>
            <person name="Paterson A.H."/>
            <person name="Gonsalves D."/>
            <person name="Wang L."/>
            <person name="Alam M."/>
        </authorList>
    </citation>
    <scope>NUCLEOTIDE SEQUENCE [LARGE SCALE GENOMIC DNA]</scope>
    <source>
        <strain>cv. SunUp</strain>
    </source>
</reference>
<organism>
    <name type="scientific">Carica papaya</name>
    <name type="common">Papaya</name>
    <dbReference type="NCBI Taxonomy" id="3649"/>
    <lineage>
        <taxon>Eukaryota</taxon>
        <taxon>Viridiplantae</taxon>
        <taxon>Streptophyta</taxon>
        <taxon>Embryophyta</taxon>
        <taxon>Tracheophyta</taxon>
        <taxon>Spermatophyta</taxon>
        <taxon>Magnoliopsida</taxon>
        <taxon>eudicotyledons</taxon>
        <taxon>Gunneridae</taxon>
        <taxon>Pentapetalae</taxon>
        <taxon>rosids</taxon>
        <taxon>malvids</taxon>
        <taxon>Brassicales</taxon>
        <taxon>Caricaceae</taxon>
        <taxon>Carica</taxon>
    </lineage>
</organism>
<protein>
    <recommendedName>
        <fullName evidence="2">Large ribosomal subunit protein uL22c</fullName>
    </recommendedName>
    <alternativeName>
        <fullName>50S ribosomal protein L22, chloroplastic</fullName>
    </alternativeName>
</protein>
<keyword id="KW-0150">Chloroplast</keyword>
<keyword id="KW-0934">Plastid</keyword>
<keyword id="KW-0687">Ribonucleoprotein</keyword>
<keyword id="KW-0689">Ribosomal protein</keyword>
<keyword id="KW-0694">RNA-binding</keyword>
<keyword id="KW-0699">rRNA-binding</keyword>
<accession>B1A974</accession>
<feature type="chain" id="PRO_0000354561" description="Large ribosomal subunit protein uL22c">
    <location>
        <begin position="1"/>
        <end position="142"/>
    </location>
</feature>
<dbReference type="EMBL" id="EU431223">
    <property type="protein sequence ID" value="ABY86822.1"/>
    <property type="molecule type" value="Genomic_DNA"/>
</dbReference>
<dbReference type="RefSeq" id="YP_001671722.1">
    <property type="nucleotide sequence ID" value="NC_010323.1"/>
</dbReference>
<dbReference type="SMR" id="B1A974"/>
<dbReference type="GeneID" id="5878425"/>
<dbReference type="KEGG" id="cpap:5878425"/>
<dbReference type="OrthoDB" id="1840754at2759"/>
<dbReference type="GO" id="GO:0009507">
    <property type="term" value="C:chloroplast"/>
    <property type="evidence" value="ECO:0007669"/>
    <property type="project" value="UniProtKB-SubCell"/>
</dbReference>
<dbReference type="GO" id="GO:0015934">
    <property type="term" value="C:large ribosomal subunit"/>
    <property type="evidence" value="ECO:0007669"/>
    <property type="project" value="InterPro"/>
</dbReference>
<dbReference type="GO" id="GO:0019843">
    <property type="term" value="F:rRNA binding"/>
    <property type="evidence" value="ECO:0007669"/>
    <property type="project" value="UniProtKB-UniRule"/>
</dbReference>
<dbReference type="GO" id="GO:0003735">
    <property type="term" value="F:structural constituent of ribosome"/>
    <property type="evidence" value="ECO:0007669"/>
    <property type="project" value="InterPro"/>
</dbReference>
<dbReference type="GO" id="GO:0006412">
    <property type="term" value="P:translation"/>
    <property type="evidence" value="ECO:0007669"/>
    <property type="project" value="UniProtKB-UniRule"/>
</dbReference>
<dbReference type="CDD" id="cd00336">
    <property type="entry name" value="Ribosomal_L22"/>
    <property type="match status" value="1"/>
</dbReference>
<dbReference type="FunFam" id="3.90.470.10:FF:000006">
    <property type="entry name" value="50S ribosomal protein L22, chloroplastic"/>
    <property type="match status" value="1"/>
</dbReference>
<dbReference type="Gene3D" id="3.90.470.10">
    <property type="entry name" value="Ribosomal protein L22/L17"/>
    <property type="match status" value="1"/>
</dbReference>
<dbReference type="HAMAP" id="MF_01331_B">
    <property type="entry name" value="Ribosomal_uL22_B"/>
    <property type="match status" value="1"/>
</dbReference>
<dbReference type="InterPro" id="IPR001063">
    <property type="entry name" value="Ribosomal_uL22"/>
</dbReference>
<dbReference type="InterPro" id="IPR005727">
    <property type="entry name" value="Ribosomal_uL22_bac/chlpt-type"/>
</dbReference>
<dbReference type="InterPro" id="IPR047867">
    <property type="entry name" value="Ribosomal_uL22_bac/org-type"/>
</dbReference>
<dbReference type="InterPro" id="IPR018260">
    <property type="entry name" value="Ribosomal_uL22_CS"/>
</dbReference>
<dbReference type="InterPro" id="IPR036394">
    <property type="entry name" value="Ribosomal_uL22_sf"/>
</dbReference>
<dbReference type="NCBIfam" id="TIGR01044">
    <property type="entry name" value="rplV_bact"/>
    <property type="match status" value="1"/>
</dbReference>
<dbReference type="PANTHER" id="PTHR13501">
    <property type="entry name" value="CHLOROPLAST 50S RIBOSOMAL PROTEIN L22-RELATED"/>
    <property type="match status" value="1"/>
</dbReference>
<dbReference type="PANTHER" id="PTHR13501:SF10">
    <property type="entry name" value="LARGE RIBOSOMAL SUBUNIT PROTEIN UL22M"/>
    <property type="match status" value="1"/>
</dbReference>
<dbReference type="Pfam" id="PF00237">
    <property type="entry name" value="Ribosomal_L22"/>
    <property type="match status" value="1"/>
</dbReference>
<dbReference type="SUPFAM" id="SSF54843">
    <property type="entry name" value="Ribosomal protein L22"/>
    <property type="match status" value="1"/>
</dbReference>
<dbReference type="PROSITE" id="PS00464">
    <property type="entry name" value="RIBOSOMAL_L22"/>
    <property type="match status" value="1"/>
</dbReference>
<proteinExistence type="inferred from homology"/>
<name>RK22_CARPA</name>
<gene>
    <name type="primary">rpl22</name>
</gene>
<comment type="function">
    <text evidence="1">This protein binds specifically to 23S rRNA.</text>
</comment>
<comment type="function">
    <text evidence="1">The globular domain of the protein is located near the polypeptide exit tunnel on the outside of the subunit, while an extended beta-hairpin is found that lines the wall of the exit tunnel in the center of the 70S ribosome.</text>
</comment>
<comment type="subunit">
    <text evidence="1">Part of the 50S ribosomal subunit.</text>
</comment>
<comment type="subcellular location">
    <subcellularLocation>
        <location>Plastid</location>
        <location>Chloroplast</location>
    </subcellularLocation>
</comment>
<comment type="similarity">
    <text evidence="2">Belongs to the universal ribosomal protein uL22 family.</text>
</comment>
<geneLocation type="chloroplast"/>